<evidence type="ECO:0000255" key="1">
    <source>
        <dbReference type="HAMAP-Rule" id="MF_00251"/>
    </source>
</evidence>
<evidence type="ECO:0000305" key="2"/>
<protein>
    <recommendedName>
        <fullName evidence="1">Large ribosomal subunit protein bL36</fullName>
    </recommendedName>
    <alternativeName>
        <fullName evidence="2">50S ribosomal protein L36</fullName>
    </alternativeName>
</protein>
<accession>C3KVM6</accession>
<keyword id="KW-0687">Ribonucleoprotein</keyword>
<keyword id="KW-0689">Ribosomal protein</keyword>
<dbReference type="EMBL" id="CP001083">
    <property type="protein sequence ID" value="ACQ51716.1"/>
    <property type="molecule type" value="Genomic_DNA"/>
</dbReference>
<dbReference type="RefSeq" id="WP_003156543.1">
    <property type="nucleotide sequence ID" value="NC_012658.1"/>
</dbReference>
<dbReference type="SMR" id="C3KVM6"/>
<dbReference type="GeneID" id="97412846"/>
<dbReference type="KEGG" id="cbi:CLJ_B3764"/>
<dbReference type="HOGENOM" id="CLU_135723_6_2_9"/>
<dbReference type="Proteomes" id="UP000002333">
    <property type="component" value="Chromosome"/>
</dbReference>
<dbReference type="GO" id="GO:0005737">
    <property type="term" value="C:cytoplasm"/>
    <property type="evidence" value="ECO:0007669"/>
    <property type="project" value="UniProtKB-ARBA"/>
</dbReference>
<dbReference type="GO" id="GO:1990904">
    <property type="term" value="C:ribonucleoprotein complex"/>
    <property type="evidence" value="ECO:0007669"/>
    <property type="project" value="UniProtKB-KW"/>
</dbReference>
<dbReference type="GO" id="GO:0005840">
    <property type="term" value="C:ribosome"/>
    <property type="evidence" value="ECO:0007669"/>
    <property type="project" value="UniProtKB-KW"/>
</dbReference>
<dbReference type="GO" id="GO:0003735">
    <property type="term" value="F:structural constituent of ribosome"/>
    <property type="evidence" value="ECO:0007669"/>
    <property type="project" value="InterPro"/>
</dbReference>
<dbReference type="GO" id="GO:0006412">
    <property type="term" value="P:translation"/>
    <property type="evidence" value="ECO:0007669"/>
    <property type="project" value="UniProtKB-UniRule"/>
</dbReference>
<dbReference type="HAMAP" id="MF_00251">
    <property type="entry name" value="Ribosomal_bL36"/>
    <property type="match status" value="1"/>
</dbReference>
<dbReference type="InterPro" id="IPR000473">
    <property type="entry name" value="Ribosomal_bL36"/>
</dbReference>
<dbReference type="InterPro" id="IPR035977">
    <property type="entry name" value="Ribosomal_bL36_sp"/>
</dbReference>
<dbReference type="NCBIfam" id="TIGR01022">
    <property type="entry name" value="rpmJ_bact"/>
    <property type="match status" value="1"/>
</dbReference>
<dbReference type="PANTHER" id="PTHR42888">
    <property type="entry name" value="50S RIBOSOMAL PROTEIN L36, CHLOROPLASTIC"/>
    <property type="match status" value="1"/>
</dbReference>
<dbReference type="PANTHER" id="PTHR42888:SF1">
    <property type="entry name" value="LARGE RIBOSOMAL SUBUNIT PROTEIN BL36C"/>
    <property type="match status" value="1"/>
</dbReference>
<dbReference type="Pfam" id="PF00444">
    <property type="entry name" value="Ribosomal_L36"/>
    <property type="match status" value="1"/>
</dbReference>
<dbReference type="SUPFAM" id="SSF57840">
    <property type="entry name" value="Ribosomal protein L36"/>
    <property type="match status" value="1"/>
</dbReference>
<dbReference type="PROSITE" id="PS00828">
    <property type="entry name" value="RIBOSOMAL_L36"/>
    <property type="match status" value="1"/>
</dbReference>
<gene>
    <name evidence="1" type="primary">rpmJ</name>
    <name type="ordered locus">CLJ_B3764</name>
</gene>
<proteinExistence type="inferred from homology"/>
<reference key="1">
    <citation type="submission" date="2008-05" db="EMBL/GenBank/DDBJ databases">
        <title>Genome sequence of Clostridium botulinum Ba4 strain 657.</title>
        <authorList>
            <person name="Shrivastava S."/>
            <person name="Brown J.L."/>
            <person name="Bruce D."/>
            <person name="Detter C."/>
            <person name="Munk C."/>
            <person name="Smith L.A."/>
            <person name="Smith T.J."/>
            <person name="Sutton G."/>
            <person name="Brettin T.S."/>
        </authorList>
    </citation>
    <scope>NUCLEOTIDE SEQUENCE [LARGE SCALE GENOMIC DNA]</scope>
    <source>
        <strain>657 / Type Ba4</strain>
    </source>
</reference>
<feature type="chain" id="PRO_1000204542" description="Large ribosomal subunit protein bL36">
    <location>
        <begin position="1"/>
        <end position="37"/>
    </location>
</feature>
<comment type="similarity">
    <text evidence="1">Belongs to the bacterial ribosomal protein bL36 family.</text>
</comment>
<organism>
    <name type="scientific">Clostridium botulinum (strain 657 / Type Ba4)</name>
    <dbReference type="NCBI Taxonomy" id="515621"/>
    <lineage>
        <taxon>Bacteria</taxon>
        <taxon>Bacillati</taxon>
        <taxon>Bacillota</taxon>
        <taxon>Clostridia</taxon>
        <taxon>Eubacteriales</taxon>
        <taxon>Clostridiaceae</taxon>
        <taxon>Clostridium</taxon>
    </lineage>
</organism>
<sequence length="37" mass="4305">MKVRPSVKPICEKCKVIRRKGKVMVICENPKHKQKQG</sequence>
<name>RL36_CLOB6</name>